<proteinExistence type="inferred from homology"/>
<name>CBIN_SALNS</name>
<gene>
    <name evidence="1" type="primary">cbiN</name>
    <name type="ordered locus">SNSL254_A2198</name>
</gene>
<keyword id="KW-0997">Cell inner membrane</keyword>
<keyword id="KW-1003">Cell membrane</keyword>
<keyword id="KW-0169">Cobalamin biosynthesis</keyword>
<keyword id="KW-0170">Cobalt</keyword>
<keyword id="KW-0171">Cobalt transport</keyword>
<keyword id="KW-0406">Ion transport</keyword>
<keyword id="KW-0472">Membrane</keyword>
<keyword id="KW-0812">Transmembrane</keyword>
<keyword id="KW-1133">Transmembrane helix</keyword>
<keyword id="KW-0813">Transport</keyword>
<feature type="chain" id="PRO_1000116114" description="Cobalt transport protein CbiN">
    <location>
        <begin position="1"/>
        <end position="93"/>
    </location>
</feature>
<feature type="transmembrane region" description="Helical" evidence="1">
    <location>
        <begin position="5"/>
        <end position="25"/>
    </location>
</feature>
<feature type="transmembrane region" description="Helical" evidence="1">
    <location>
        <begin position="63"/>
        <end position="83"/>
    </location>
</feature>
<evidence type="ECO:0000255" key="1">
    <source>
        <dbReference type="HAMAP-Rule" id="MF_00330"/>
    </source>
</evidence>
<protein>
    <recommendedName>
        <fullName evidence="1">Cobalt transport protein CbiN</fullName>
    </recommendedName>
    <alternativeName>
        <fullName evidence="1">Energy-coupling factor transporter probable substrate-capture protein CbiN</fullName>
        <shortName evidence="1">ECF transporter S component CbiN</shortName>
    </alternativeName>
</protein>
<organism>
    <name type="scientific">Salmonella newport (strain SL254)</name>
    <dbReference type="NCBI Taxonomy" id="423368"/>
    <lineage>
        <taxon>Bacteria</taxon>
        <taxon>Pseudomonadati</taxon>
        <taxon>Pseudomonadota</taxon>
        <taxon>Gammaproteobacteria</taxon>
        <taxon>Enterobacterales</taxon>
        <taxon>Enterobacteriaceae</taxon>
        <taxon>Salmonella</taxon>
    </lineage>
</organism>
<comment type="function">
    <text evidence="1">Part of the energy-coupling factor (ECF) transporter complex CbiMNOQ involved in cobalt import.</text>
</comment>
<comment type="pathway">
    <text evidence="1">Cofactor biosynthesis; adenosylcobalamin biosynthesis.</text>
</comment>
<comment type="subunit">
    <text evidence="1">Forms an energy-coupling factor (ECF) transporter complex composed of an ATP-binding protein (A component, CbiO), a transmembrane protein (T component, CbiQ) and 2 possible substrate-capture proteins (S components, CbiM and CbiN) of unknown stoichimetry.</text>
</comment>
<comment type="subcellular location">
    <subcellularLocation>
        <location evidence="1">Cell inner membrane</location>
        <topology evidence="1">Multi-pass membrane protein</topology>
    </subcellularLocation>
</comment>
<comment type="similarity">
    <text evidence="1">Belongs to the CbiN family.</text>
</comment>
<accession>B4SWZ0</accession>
<sequence>MKKTLMLLAMVVALVILPFFINHGGEYGGSDGEAERQIQAIAPQYKPWFQPLYEPASGEIESLLFTLQGSLGAAVIFYILGYCKGKQRRDDRA</sequence>
<dbReference type="EMBL" id="CP001113">
    <property type="protein sequence ID" value="ACF64803.1"/>
    <property type="molecule type" value="Genomic_DNA"/>
</dbReference>
<dbReference type="RefSeq" id="WP_000753210.1">
    <property type="nucleotide sequence ID" value="NZ_CCMR01000002.1"/>
</dbReference>
<dbReference type="KEGG" id="see:SNSL254_A2198"/>
<dbReference type="HOGENOM" id="CLU_136197_2_0_6"/>
<dbReference type="UniPathway" id="UPA00148"/>
<dbReference type="Proteomes" id="UP000008824">
    <property type="component" value="Chromosome"/>
</dbReference>
<dbReference type="GO" id="GO:0005886">
    <property type="term" value="C:plasma membrane"/>
    <property type="evidence" value="ECO:0007669"/>
    <property type="project" value="UniProtKB-SubCell"/>
</dbReference>
<dbReference type="GO" id="GO:0015087">
    <property type="term" value="F:cobalt ion transmembrane transporter activity"/>
    <property type="evidence" value="ECO:0007669"/>
    <property type="project" value="UniProtKB-UniRule"/>
</dbReference>
<dbReference type="GO" id="GO:0009236">
    <property type="term" value="P:cobalamin biosynthetic process"/>
    <property type="evidence" value="ECO:0007669"/>
    <property type="project" value="UniProtKB-UniRule"/>
</dbReference>
<dbReference type="HAMAP" id="MF_00330">
    <property type="entry name" value="CbiN"/>
    <property type="match status" value="1"/>
</dbReference>
<dbReference type="InterPro" id="IPR003705">
    <property type="entry name" value="CbiN"/>
</dbReference>
<dbReference type="NCBIfam" id="TIGR01165">
    <property type="entry name" value="cbiN"/>
    <property type="match status" value="1"/>
</dbReference>
<dbReference type="NCBIfam" id="NF002780">
    <property type="entry name" value="PRK02898.1"/>
    <property type="match status" value="1"/>
</dbReference>
<dbReference type="PANTHER" id="PTHR38662">
    <property type="entry name" value="COBALT TRANSPORT PROTEIN CBIN"/>
    <property type="match status" value="1"/>
</dbReference>
<dbReference type="PANTHER" id="PTHR38662:SF1">
    <property type="entry name" value="COBALT TRANSPORT PROTEIN CBIN"/>
    <property type="match status" value="1"/>
</dbReference>
<dbReference type="Pfam" id="PF02553">
    <property type="entry name" value="CbiN"/>
    <property type="match status" value="1"/>
</dbReference>
<reference key="1">
    <citation type="journal article" date="2011" name="J. Bacteriol.">
        <title>Comparative genomics of 28 Salmonella enterica isolates: evidence for CRISPR-mediated adaptive sublineage evolution.</title>
        <authorList>
            <person name="Fricke W.F."/>
            <person name="Mammel M.K."/>
            <person name="McDermott P.F."/>
            <person name="Tartera C."/>
            <person name="White D.G."/>
            <person name="Leclerc J.E."/>
            <person name="Ravel J."/>
            <person name="Cebula T.A."/>
        </authorList>
    </citation>
    <scope>NUCLEOTIDE SEQUENCE [LARGE SCALE GENOMIC DNA]</scope>
    <source>
        <strain>SL254</strain>
    </source>
</reference>